<comment type="subunit">
    <text evidence="1">Part of the 50S ribosomal subunit.</text>
</comment>
<comment type="similarity">
    <text evidence="1">Belongs to the universal ribosomal protein uL30 family.</text>
</comment>
<feature type="chain" id="PRO_1000144654" description="Large ribosomal subunit protein uL30">
    <location>
        <begin position="1"/>
        <end position="65"/>
    </location>
</feature>
<organism>
    <name type="scientific">Brucella abortus (strain S19)</name>
    <dbReference type="NCBI Taxonomy" id="430066"/>
    <lineage>
        <taxon>Bacteria</taxon>
        <taxon>Pseudomonadati</taxon>
        <taxon>Pseudomonadota</taxon>
        <taxon>Alphaproteobacteria</taxon>
        <taxon>Hyphomicrobiales</taxon>
        <taxon>Brucellaceae</taxon>
        <taxon>Brucella/Ochrobactrum group</taxon>
        <taxon>Brucella</taxon>
    </lineage>
</organism>
<name>RL30_BRUA1</name>
<reference key="1">
    <citation type="journal article" date="2008" name="PLoS ONE">
        <title>Genome sequence of Brucella abortus vaccine strain S19 compared to virulent strains yields candidate virulence genes.</title>
        <authorList>
            <person name="Crasta O.R."/>
            <person name="Folkerts O."/>
            <person name="Fei Z."/>
            <person name="Mane S.P."/>
            <person name="Evans C."/>
            <person name="Martino-Catt S."/>
            <person name="Bricker B."/>
            <person name="Yu G."/>
            <person name="Du L."/>
            <person name="Sobral B.W."/>
        </authorList>
    </citation>
    <scope>NUCLEOTIDE SEQUENCE [LARGE SCALE GENOMIC DNA]</scope>
    <source>
        <strain>S19</strain>
    </source>
</reference>
<proteinExistence type="inferred from homology"/>
<accession>B2S661</accession>
<keyword id="KW-0687">Ribonucleoprotein</keyword>
<keyword id="KW-0689">Ribosomal protein</keyword>
<dbReference type="EMBL" id="CP000887">
    <property type="protein sequence ID" value="ACD72658.1"/>
    <property type="molecule type" value="Genomic_DNA"/>
</dbReference>
<dbReference type="RefSeq" id="WP_002967737.1">
    <property type="nucleotide sequence ID" value="NC_010742.1"/>
</dbReference>
<dbReference type="SMR" id="B2S661"/>
<dbReference type="GeneID" id="97533542"/>
<dbReference type="KEGG" id="bmc:BAbS19_I11530"/>
<dbReference type="HOGENOM" id="CLU_131047_1_2_5"/>
<dbReference type="Proteomes" id="UP000002565">
    <property type="component" value="Chromosome 1"/>
</dbReference>
<dbReference type="GO" id="GO:0022625">
    <property type="term" value="C:cytosolic large ribosomal subunit"/>
    <property type="evidence" value="ECO:0007669"/>
    <property type="project" value="TreeGrafter"/>
</dbReference>
<dbReference type="GO" id="GO:0003735">
    <property type="term" value="F:structural constituent of ribosome"/>
    <property type="evidence" value="ECO:0007669"/>
    <property type="project" value="InterPro"/>
</dbReference>
<dbReference type="GO" id="GO:0006412">
    <property type="term" value="P:translation"/>
    <property type="evidence" value="ECO:0007669"/>
    <property type="project" value="UniProtKB-UniRule"/>
</dbReference>
<dbReference type="CDD" id="cd01658">
    <property type="entry name" value="Ribosomal_L30"/>
    <property type="match status" value="1"/>
</dbReference>
<dbReference type="Gene3D" id="3.30.1390.20">
    <property type="entry name" value="Ribosomal protein L30, ferredoxin-like fold domain"/>
    <property type="match status" value="1"/>
</dbReference>
<dbReference type="HAMAP" id="MF_01371_B">
    <property type="entry name" value="Ribosomal_uL30_B"/>
    <property type="match status" value="1"/>
</dbReference>
<dbReference type="InterPro" id="IPR036919">
    <property type="entry name" value="Ribo_uL30_ferredoxin-like_sf"/>
</dbReference>
<dbReference type="InterPro" id="IPR005996">
    <property type="entry name" value="Ribosomal_uL30_bac-type"/>
</dbReference>
<dbReference type="InterPro" id="IPR016082">
    <property type="entry name" value="Ribosomal_uL30_ferredoxin-like"/>
</dbReference>
<dbReference type="NCBIfam" id="TIGR01308">
    <property type="entry name" value="rpmD_bact"/>
    <property type="match status" value="1"/>
</dbReference>
<dbReference type="PANTHER" id="PTHR15892:SF2">
    <property type="entry name" value="LARGE RIBOSOMAL SUBUNIT PROTEIN UL30M"/>
    <property type="match status" value="1"/>
</dbReference>
<dbReference type="PANTHER" id="PTHR15892">
    <property type="entry name" value="MITOCHONDRIAL RIBOSOMAL PROTEIN L30"/>
    <property type="match status" value="1"/>
</dbReference>
<dbReference type="Pfam" id="PF00327">
    <property type="entry name" value="Ribosomal_L30"/>
    <property type="match status" value="1"/>
</dbReference>
<dbReference type="PIRSF" id="PIRSF002211">
    <property type="entry name" value="Ribosomal_L30_bac-type"/>
    <property type="match status" value="1"/>
</dbReference>
<dbReference type="SUPFAM" id="SSF55129">
    <property type="entry name" value="Ribosomal protein L30p/L7e"/>
    <property type="match status" value="1"/>
</dbReference>
<gene>
    <name evidence="1" type="primary">rpmD</name>
    <name type="ordered locus">BAbS19_I11530</name>
</gene>
<protein>
    <recommendedName>
        <fullName evidence="1">Large ribosomal subunit protein uL30</fullName>
    </recommendedName>
    <alternativeName>
        <fullName evidence="2">50S ribosomal protein L30</fullName>
    </alternativeName>
</protein>
<evidence type="ECO:0000255" key="1">
    <source>
        <dbReference type="HAMAP-Rule" id="MF_01371"/>
    </source>
</evidence>
<evidence type="ECO:0000305" key="2"/>
<sequence>MAEKKGKTVTVEQIGSPIRRPAEQRATLIGLGLNKMHRRSTLEDTPAVRGMIAKLPHLVRVVDEA</sequence>